<gene>
    <name evidence="1" type="primary">rppH</name>
    <name evidence="1" type="synonym">nudH</name>
    <name type="ordered locus">Ping_0502</name>
</gene>
<name>RPPH_PSYIN</name>
<dbReference type="EC" id="3.6.1.-" evidence="1"/>
<dbReference type="EMBL" id="CP000510">
    <property type="protein sequence ID" value="ABM02357.1"/>
    <property type="molecule type" value="Genomic_DNA"/>
</dbReference>
<dbReference type="RefSeq" id="WP_011768916.1">
    <property type="nucleotide sequence ID" value="NC_008709.1"/>
</dbReference>
<dbReference type="SMR" id="A1SS92"/>
<dbReference type="STRING" id="357804.Ping_0502"/>
<dbReference type="KEGG" id="pin:Ping_0502"/>
<dbReference type="eggNOG" id="COG0494">
    <property type="taxonomic scope" value="Bacteria"/>
</dbReference>
<dbReference type="HOGENOM" id="CLU_087195_3_2_6"/>
<dbReference type="OrthoDB" id="9816040at2"/>
<dbReference type="Proteomes" id="UP000000639">
    <property type="component" value="Chromosome"/>
</dbReference>
<dbReference type="GO" id="GO:0005737">
    <property type="term" value="C:cytoplasm"/>
    <property type="evidence" value="ECO:0007669"/>
    <property type="project" value="TreeGrafter"/>
</dbReference>
<dbReference type="GO" id="GO:0034353">
    <property type="term" value="F:mRNA 5'-diphosphatase activity"/>
    <property type="evidence" value="ECO:0007669"/>
    <property type="project" value="TreeGrafter"/>
</dbReference>
<dbReference type="GO" id="GO:0006402">
    <property type="term" value="P:mRNA catabolic process"/>
    <property type="evidence" value="ECO:0007669"/>
    <property type="project" value="TreeGrafter"/>
</dbReference>
<dbReference type="CDD" id="cd03671">
    <property type="entry name" value="NUDIX_Ap4A_hydrolase_plant_like"/>
    <property type="match status" value="1"/>
</dbReference>
<dbReference type="FunFam" id="3.90.79.10:FF:000001">
    <property type="entry name" value="RNA pyrophosphohydrolase"/>
    <property type="match status" value="1"/>
</dbReference>
<dbReference type="Gene3D" id="3.90.79.10">
    <property type="entry name" value="Nucleoside Triphosphate Pyrophosphohydrolase"/>
    <property type="match status" value="1"/>
</dbReference>
<dbReference type="HAMAP" id="MF_00298">
    <property type="entry name" value="Nudix_RppH"/>
    <property type="match status" value="1"/>
</dbReference>
<dbReference type="InterPro" id="IPR020476">
    <property type="entry name" value="Nudix_hydrolase"/>
</dbReference>
<dbReference type="InterPro" id="IPR015797">
    <property type="entry name" value="NUDIX_hydrolase-like_dom_sf"/>
</dbReference>
<dbReference type="InterPro" id="IPR020084">
    <property type="entry name" value="NUDIX_hydrolase_CS"/>
</dbReference>
<dbReference type="InterPro" id="IPR000086">
    <property type="entry name" value="NUDIX_hydrolase_dom"/>
</dbReference>
<dbReference type="InterPro" id="IPR022927">
    <property type="entry name" value="RppH"/>
</dbReference>
<dbReference type="NCBIfam" id="NF001934">
    <property type="entry name" value="PRK00714.1-1"/>
    <property type="match status" value="1"/>
</dbReference>
<dbReference type="NCBIfam" id="NF001937">
    <property type="entry name" value="PRK00714.1-4"/>
    <property type="match status" value="1"/>
</dbReference>
<dbReference type="NCBIfam" id="NF001938">
    <property type="entry name" value="PRK00714.1-5"/>
    <property type="match status" value="1"/>
</dbReference>
<dbReference type="PANTHER" id="PTHR23114">
    <property type="entry name" value="M7GPPPN-MRNA HYDROLASE"/>
    <property type="match status" value="1"/>
</dbReference>
<dbReference type="PANTHER" id="PTHR23114:SF17">
    <property type="entry name" value="M7GPPPN-MRNA HYDROLASE"/>
    <property type="match status" value="1"/>
</dbReference>
<dbReference type="Pfam" id="PF00293">
    <property type="entry name" value="NUDIX"/>
    <property type="match status" value="1"/>
</dbReference>
<dbReference type="PRINTS" id="PR00502">
    <property type="entry name" value="NUDIXFAMILY"/>
</dbReference>
<dbReference type="SUPFAM" id="SSF55811">
    <property type="entry name" value="Nudix"/>
    <property type="match status" value="1"/>
</dbReference>
<dbReference type="PROSITE" id="PS51462">
    <property type="entry name" value="NUDIX"/>
    <property type="match status" value="1"/>
</dbReference>
<dbReference type="PROSITE" id="PS00893">
    <property type="entry name" value="NUDIX_BOX"/>
    <property type="match status" value="1"/>
</dbReference>
<comment type="function">
    <text evidence="1">Accelerates the degradation of transcripts by removing pyrophosphate from the 5'-end of triphosphorylated RNA, leading to a more labile monophosphorylated state that can stimulate subsequent ribonuclease cleavage.</text>
</comment>
<comment type="cofactor">
    <cofactor evidence="1">
        <name>a divalent metal cation</name>
        <dbReference type="ChEBI" id="CHEBI:60240"/>
    </cofactor>
</comment>
<comment type="similarity">
    <text evidence="1">Belongs to the Nudix hydrolase family. RppH subfamily.</text>
</comment>
<accession>A1SS92</accession>
<evidence type="ECO:0000255" key="1">
    <source>
        <dbReference type="HAMAP-Rule" id="MF_00298"/>
    </source>
</evidence>
<keyword id="KW-0378">Hydrolase</keyword>
<keyword id="KW-1185">Reference proteome</keyword>
<sequence>MIDTDGYRPNVGIIICNNNAQVLWAKRFGQHSWQFPQGGIKEGETPEQAMYRELYEEVGLKPEHVKLLATSRHWLRYKLPKRLVRWDSPDPVCIGQKQRWFLLQLISDEQQIEFEACGNPEFDAWRWVTYWYPVRQVVSFKCEVYRCALKEFSAVAFSLMKKSSDKKRNKRPRRASFYKKR</sequence>
<proteinExistence type="inferred from homology"/>
<reference key="1">
    <citation type="journal article" date="2008" name="BMC Genomics">
        <title>Genomics of an extreme psychrophile, Psychromonas ingrahamii.</title>
        <authorList>
            <person name="Riley M."/>
            <person name="Staley J.T."/>
            <person name="Danchin A."/>
            <person name="Wang T.Z."/>
            <person name="Brettin T.S."/>
            <person name="Hauser L.J."/>
            <person name="Land M.L."/>
            <person name="Thompson L.S."/>
        </authorList>
    </citation>
    <scope>NUCLEOTIDE SEQUENCE [LARGE SCALE GENOMIC DNA]</scope>
    <source>
        <strain>DSM 17664 / CCUG 51855 / 37</strain>
    </source>
</reference>
<protein>
    <recommendedName>
        <fullName evidence="1">RNA pyrophosphohydrolase</fullName>
        <ecNumber evidence="1">3.6.1.-</ecNumber>
    </recommendedName>
    <alternativeName>
        <fullName evidence="1">(Di)nucleoside polyphosphate hydrolase</fullName>
    </alternativeName>
</protein>
<organism>
    <name type="scientific">Psychromonas ingrahamii (strain DSM 17664 / CCUG 51855 / 37)</name>
    <dbReference type="NCBI Taxonomy" id="357804"/>
    <lineage>
        <taxon>Bacteria</taxon>
        <taxon>Pseudomonadati</taxon>
        <taxon>Pseudomonadota</taxon>
        <taxon>Gammaproteobacteria</taxon>
        <taxon>Alteromonadales</taxon>
        <taxon>Psychromonadaceae</taxon>
        <taxon>Psychromonas</taxon>
    </lineage>
</organism>
<feature type="chain" id="PRO_1000021977" description="RNA pyrophosphohydrolase">
    <location>
        <begin position="1"/>
        <end position="181"/>
    </location>
</feature>
<feature type="domain" description="Nudix hydrolase" evidence="1">
    <location>
        <begin position="6"/>
        <end position="150"/>
    </location>
</feature>
<feature type="short sequence motif" description="Nudix box">
    <location>
        <begin position="38"/>
        <end position="59"/>
    </location>
</feature>